<gene>
    <name evidence="1" type="primary">metK</name>
    <name type="ordered locus">ML0544</name>
</gene>
<reference key="1">
    <citation type="journal article" date="2001" name="Nature">
        <title>Massive gene decay in the leprosy bacillus.</title>
        <authorList>
            <person name="Cole S.T."/>
            <person name="Eiglmeier K."/>
            <person name="Parkhill J."/>
            <person name="James K.D."/>
            <person name="Thomson N.R."/>
            <person name="Wheeler P.R."/>
            <person name="Honore N."/>
            <person name="Garnier T."/>
            <person name="Churcher C.M."/>
            <person name="Harris D.E."/>
            <person name="Mungall K.L."/>
            <person name="Basham D."/>
            <person name="Brown D."/>
            <person name="Chillingworth T."/>
            <person name="Connor R."/>
            <person name="Davies R.M."/>
            <person name="Devlin K."/>
            <person name="Duthoy S."/>
            <person name="Feltwell T."/>
            <person name="Fraser A."/>
            <person name="Hamlin N."/>
            <person name="Holroyd S."/>
            <person name="Hornsby T."/>
            <person name="Jagels K."/>
            <person name="Lacroix C."/>
            <person name="Maclean J."/>
            <person name="Moule S."/>
            <person name="Murphy L.D."/>
            <person name="Oliver K."/>
            <person name="Quail M.A."/>
            <person name="Rajandream M.A."/>
            <person name="Rutherford K.M."/>
            <person name="Rutter S."/>
            <person name="Seeger K."/>
            <person name="Simon S."/>
            <person name="Simmonds M."/>
            <person name="Skelton J."/>
            <person name="Squares R."/>
            <person name="Squares S."/>
            <person name="Stevens K."/>
            <person name="Taylor K."/>
            <person name="Whitehead S."/>
            <person name="Woodward J.R."/>
            <person name="Barrell B.G."/>
        </authorList>
    </citation>
    <scope>NUCLEOTIDE SEQUENCE [LARGE SCALE GENOMIC DNA]</scope>
    <source>
        <strain>TN</strain>
    </source>
</reference>
<sequence>MSEKGRLFTSESVTEGHPDKICDAISDSILDALLAEDPCSRVAVETLVTTGQVHVVGEVTTLAKTAFADISNTVRERILDIGYDSSDKGFDGASCGVNIGIGAQSSDIAQGVNTAHEVRVEGAADPLDAQGAGDQGLMFGYAINDTPELMPLPIALAHRLARRLTEVRKNGVLPYLRSDGKTQVTIAYEDNVPVRLDTVVISTQHAAGVDLDATLAPDIREKVLNTVIDDLSHDTLDVSSVRVLVNPTGKFVLGGPMGDAGLTGRKIIVDTYGGWARHGGGAFSGKDPSKVDRSAAYAMRWVAKNIVAAGLAERIEVQVAYAIGKAAPVGLFVETFGTEAVDPAKIEKAIGEVFDLRPGAIIRDLHLLRPIYAQTAAYGHFGRTDVELPWEQLNKVDDLKRAI</sequence>
<comment type="function">
    <text evidence="1">Catalyzes the formation of S-adenosylmethionine (AdoMet) from methionine and ATP. The overall synthetic reaction is composed of two sequential steps, AdoMet formation and the subsequent tripolyphosphate hydrolysis which occurs prior to release of AdoMet from the enzyme.</text>
</comment>
<comment type="catalytic activity">
    <reaction evidence="1">
        <text>L-methionine + ATP + H2O = S-adenosyl-L-methionine + phosphate + diphosphate</text>
        <dbReference type="Rhea" id="RHEA:21080"/>
        <dbReference type="ChEBI" id="CHEBI:15377"/>
        <dbReference type="ChEBI" id="CHEBI:30616"/>
        <dbReference type="ChEBI" id="CHEBI:33019"/>
        <dbReference type="ChEBI" id="CHEBI:43474"/>
        <dbReference type="ChEBI" id="CHEBI:57844"/>
        <dbReference type="ChEBI" id="CHEBI:59789"/>
        <dbReference type="EC" id="2.5.1.6"/>
    </reaction>
</comment>
<comment type="cofactor">
    <cofactor evidence="1">
        <name>Mg(2+)</name>
        <dbReference type="ChEBI" id="CHEBI:18420"/>
    </cofactor>
    <text evidence="1">Binds 2 divalent ions per subunit.</text>
</comment>
<comment type="cofactor">
    <cofactor evidence="1">
        <name>K(+)</name>
        <dbReference type="ChEBI" id="CHEBI:29103"/>
    </cofactor>
    <text evidence="1">Binds 1 potassium ion per subunit.</text>
</comment>
<comment type="pathway">
    <text evidence="1">Amino-acid biosynthesis; S-adenosyl-L-methionine biosynthesis; S-adenosyl-L-methionine from L-methionine: step 1/1.</text>
</comment>
<comment type="subunit">
    <text evidence="1">Homotetramer; dimer of dimers.</text>
</comment>
<comment type="subcellular location">
    <subcellularLocation>
        <location evidence="1">Cytoplasm</location>
    </subcellularLocation>
</comment>
<comment type="similarity">
    <text evidence="1">Belongs to the AdoMet synthase family.</text>
</comment>
<evidence type="ECO:0000255" key="1">
    <source>
        <dbReference type="HAMAP-Rule" id="MF_00086"/>
    </source>
</evidence>
<protein>
    <recommendedName>
        <fullName evidence="1">S-adenosylmethionine synthase</fullName>
        <shortName evidence="1">AdoMet synthase</shortName>
        <ecNumber evidence="1">2.5.1.6</ecNumber>
    </recommendedName>
    <alternativeName>
        <fullName evidence="1">MAT</fullName>
    </alternativeName>
    <alternativeName>
        <fullName evidence="1">Methionine adenosyltransferase</fullName>
    </alternativeName>
</protein>
<dbReference type="EC" id="2.5.1.6" evidence="1"/>
<dbReference type="EMBL" id="AL583918">
    <property type="protein sequence ID" value="CAC30052.1"/>
    <property type="molecule type" value="Genomic_DNA"/>
</dbReference>
<dbReference type="PIR" id="H86976">
    <property type="entry name" value="H86976"/>
</dbReference>
<dbReference type="RefSeq" id="NP_301463.1">
    <property type="nucleotide sequence ID" value="NC_002677.1"/>
</dbReference>
<dbReference type="RefSeq" id="WP_010907787.1">
    <property type="nucleotide sequence ID" value="NC_002677.1"/>
</dbReference>
<dbReference type="SMR" id="Q9CCQ4"/>
<dbReference type="STRING" id="272631.gene:17574365"/>
<dbReference type="KEGG" id="mle:ML0544"/>
<dbReference type="PATRIC" id="fig|272631.5.peg.945"/>
<dbReference type="Leproma" id="ML0544"/>
<dbReference type="eggNOG" id="COG0192">
    <property type="taxonomic scope" value="Bacteria"/>
</dbReference>
<dbReference type="HOGENOM" id="CLU_041802_1_1_11"/>
<dbReference type="OrthoDB" id="9801686at2"/>
<dbReference type="UniPathway" id="UPA00315">
    <property type="reaction ID" value="UER00080"/>
</dbReference>
<dbReference type="Proteomes" id="UP000000806">
    <property type="component" value="Chromosome"/>
</dbReference>
<dbReference type="GO" id="GO:0005737">
    <property type="term" value="C:cytoplasm"/>
    <property type="evidence" value="ECO:0007669"/>
    <property type="project" value="UniProtKB-SubCell"/>
</dbReference>
<dbReference type="GO" id="GO:0005524">
    <property type="term" value="F:ATP binding"/>
    <property type="evidence" value="ECO:0007669"/>
    <property type="project" value="UniProtKB-UniRule"/>
</dbReference>
<dbReference type="GO" id="GO:0000287">
    <property type="term" value="F:magnesium ion binding"/>
    <property type="evidence" value="ECO:0007669"/>
    <property type="project" value="UniProtKB-UniRule"/>
</dbReference>
<dbReference type="GO" id="GO:0004478">
    <property type="term" value="F:methionine adenosyltransferase activity"/>
    <property type="evidence" value="ECO:0007669"/>
    <property type="project" value="UniProtKB-UniRule"/>
</dbReference>
<dbReference type="GO" id="GO:0006730">
    <property type="term" value="P:one-carbon metabolic process"/>
    <property type="evidence" value="ECO:0007669"/>
    <property type="project" value="UniProtKB-KW"/>
</dbReference>
<dbReference type="GO" id="GO:0006556">
    <property type="term" value="P:S-adenosylmethionine biosynthetic process"/>
    <property type="evidence" value="ECO:0007669"/>
    <property type="project" value="UniProtKB-UniRule"/>
</dbReference>
<dbReference type="CDD" id="cd18079">
    <property type="entry name" value="S-AdoMet_synt"/>
    <property type="match status" value="1"/>
</dbReference>
<dbReference type="FunFam" id="3.30.300.10:FF:000006">
    <property type="entry name" value="S-adenosylmethionine synthase"/>
    <property type="match status" value="1"/>
</dbReference>
<dbReference type="Gene3D" id="3.30.300.10">
    <property type="match status" value="3"/>
</dbReference>
<dbReference type="HAMAP" id="MF_00086">
    <property type="entry name" value="S_AdoMet_synth1"/>
    <property type="match status" value="1"/>
</dbReference>
<dbReference type="InterPro" id="IPR022631">
    <property type="entry name" value="ADOMET_SYNTHASE_CS"/>
</dbReference>
<dbReference type="InterPro" id="IPR022630">
    <property type="entry name" value="S-AdoMet_synt_C"/>
</dbReference>
<dbReference type="InterPro" id="IPR022629">
    <property type="entry name" value="S-AdoMet_synt_central"/>
</dbReference>
<dbReference type="InterPro" id="IPR022628">
    <property type="entry name" value="S-AdoMet_synt_N"/>
</dbReference>
<dbReference type="InterPro" id="IPR002133">
    <property type="entry name" value="S-AdoMet_synthetase"/>
</dbReference>
<dbReference type="InterPro" id="IPR022636">
    <property type="entry name" value="S-AdoMet_synthetase_sfam"/>
</dbReference>
<dbReference type="NCBIfam" id="TIGR01034">
    <property type="entry name" value="metK"/>
    <property type="match status" value="1"/>
</dbReference>
<dbReference type="PANTHER" id="PTHR11964">
    <property type="entry name" value="S-ADENOSYLMETHIONINE SYNTHETASE"/>
    <property type="match status" value="1"/>
</dbReference>
<dbReference type="Pfam" id="PF02773">
    <property type="entry name" value="S-AdoMet_synt_C"/>
    <property type="match status" value="1"/>
</dbReference>
<dbReference type="Pfam" id="PF02772">
    <property type="entry name" value="S-AdoMet_synt_M"/>
    <property type="match status" value="1"/>
</dbReference>
<dbReference type="Pfam" id="PF00438">
    <property type="entry name" value="S-AdoMet_synt_N"/>
    <property type="match status" value="1"/>
</dbReference>
<dbReference type="PIRSF" id="PIRSF000497">
    <property type="entry name" value="MAT"/>
    <property type="match status" value="1"/>
</dbReference>
<dbReference type="SUPFAM" id="SSF55973">
    <property type="entry name" value="S-adenosylmethionine synthetase"/>
    <property type="match status" value="3"/>
</dbReference>
<dbReference type="PROSITE" id="PS00376">
    <property type="entry name" value="ADOMET_SYNTHASE_1"/>
    <property type="match status" value="1"/>
</dbReference>
<dbReference type="PROSITE" id="PS00377">
    <property type="entry name" value="ADOMET_SYNTHASE_2"/>
    <property type="match status" value="1"/>
</dbReference>
<keyword id="KW-0067">ATP-binding</keyword>
<keyword id="KW-0963">Cytoplasm</keyword>
<keyword id="KW-0460">Magnesium</keyword>
<keyword id="KW-0479">Metal-binding</keyword>
<keyword id="KW-0547">Nucleotide-binding</keyword>
<keyword id="KW-0554">One-carbon metabolism</keyword>
<keyword id="KW-0630">Potassium</keyword>
<keyword id="KW-1185">Reference proteome</keyword>
<keyword id="KW-0808">Transferase</keyword>
<proteinExistence type="inferred from homology"/>
<feature type="chain" id="PRO_0000174555" description="S-adenosylmethionine synthase">
    <location>
        <begin position="1"/>
        <end position="403"/>
    </location>
</feature>
<feature type="region of interest" description="Flexible loop" evidence="1">
    <location>
        <begin position="104"/>
        <end position="114"/>
    </location>
</feature>
<feature type="binding site" description="in other chain" evidence="1">
    <location>
        <position position="17"/>
    </location>
    <ligand>
        <name>ATP</name>
        <dbReference type="ChEBI" id="CHEBI:30616"/>
        <note>ligand shared between two neighboring subunits</note>
    </ligand>
</feature>
<feature type="binding site" evidence="1">
    <location>
        <position position="19"/>
    </location>
    <ligand>
        <name>Mg(2+)</name>
        <dbReference type="ChEBI" id="CHEBI:18420"/>
    </ligand>
</feature>
<feature type="binding site" evidence="1">
    <location>
        <position position="45"/>
    </location>
    <ligand>
        <name>K(+)</name>
        <dbReference type="ChEBI" id="CHEBI:29103"/>
    </ligand>
</feature>
<feature type="binding site" description="in other chain" evidence="1">
    <location>
        <position position="58"/>
    </location>
    <ligand>
        <name>L-methionine</name>
        <dbReference type="ChEBI" id="CHEBI:57844"/>
        <note>ligand shared between two neighboring subunits</note>
    </ligand>
</feature>
<feature type="binding site" description="in other chain" evidence="1">
    <location>
        <position position="104"/>
    </location>
    <ligand>
        <name>L-methionine</name>
        <dbReference type="ChEBI" id="CHEBI:57844"/>
        <note>ligand shared between two neighboring subunits</note>
    </ligand>
</feature>
<feature type="binding site" description="in other chain" evidence="1">
    <location>
        <begin position="179"/>
        <end position="181"/>
    </location>
    <ligand>
        <name>ATP</name>
        <dbReference type="ChEBI" id="CHEBI:30616"/>
        <note>ligand shared between two neighboring subunits</note>
    </ligand>
</feature>
<feature type="binding site" description="in other chain" evidence="1">
    <location>
        <begin position="250"/>
        <end position="251"/>
    </location>
    <ligand>
        <name>ATP</name>
        <dbReference type="ChEBI" id="CHEBI:30616"/>
        <note>ligand shared between two neighboring subunits</note>
    </ligand>
</feature>
<feature type="binding site" evidence="1">
    <location>
        <position position="259"/>
    </location>
    <ligand>
        <name>ATP</name>
        <dbReference type="ChEBI" id="CHEBI:30616"/>
        <note>ligand shared between two neighboring subunits</note>
    </ligand>
</feature>
<feature type="binding site" evidence="1">
    <location>
        <position position="259"/>
    </location>
    <ligand>
        <name>L-methionine</name>
        <dbReference type="ChEBI" id="CHEBI:57844"/>
        <note>ligand shared between two neighboring subunits</note>
    </ligand>
</feature>
<feature type="binding site" description="in other chain" evidence="1">
    <location>
        <begin position="265"/>
        <end position="266"/>
    </location>
    <ligand>
        <name>ATP</name>
        <dbReference type="ChEBI" id="CHEBI:30616"/>
        <note>ligand shared between two neighboring subunits</note>
    </ligand>
</feature>
<feature type="binding site" evidence="1">
    <location>
        <position position="282"/>
    </location>
    <ligand>
        <name>ATP</name>
        <dbReference type="ChEBI" id="CHEBI:30616"/>
        <note>ligand shared between two neighboring subunits</note>
    </ligand>
</feature>
<feature type="binding site" evidence="1">
    <location>
        <position position="286"/>
    </location>
    <ligand>
        <name>ATP</name>
        <dbReference type="ChEBI" id="CHEBI:30616"/>
        <note>ligand shared between two neighboring subunits</note>
    </ligand>
</feature>
<feature type="binding site" description="in other chain" evidence="1">
    <location>
        <position position="290"/>
    </location>
    <ligand>
        <name>L-methionine</name>
        <dbReference type="ChEBI" id="CHEBI:57844"/>
        <note>ligand shared between two neighboring subunits</note>
    </ligand>
</feature>
<organism>
    <name type="scientific">Mycobacterium leprae (strain TN)</name>
    <dbReference type="NCBI Taxonomy" id="272631"/>
    <lineage>
        <taxon>Bacteria</taxon>
        <taxon>Bacillati</taxon>
        <taxon>Actinomycetota</taxon>
        <taxon>Actinomycetes</taxon>
        <taxon>Mycobacteriales</taxon>
        <taxon>Mycobacteriaceae</taxon>
        <taxon>Mycobacterium</taxon>
    </lineage>
</organism>
<accession>Q9CCQ4</accession>
<name>METK_MYCLE</name>